<keyword id="KW-0067">ATP-binding</keyword>
<keyword id="KW-0436">Ligase</keyword>
<keyword id="KW-0460">Magnesium</keyword>
<keyword id="KW-0479">Metal-binding</keyword>
<keyword id="KW-0520">NAD</keyword>
<keyword id="KW-0547">Nucleotide-binding</keyword>
<sequence>MSKLQDVIVQEMKVKKRIDSAEEIMELKQFIKNYVQSHSFIKSLVLGISGGQDSTLVGKLVQMSVNELREEGIDCTFIAVKLPYGVQKDADEVDQALRFIEPDEIVTVNIKPAVDQSVQSLKEAGIVLTDFQKGNEKARERMKVQFSIASNRQGIVVGTDHSAENITGFYTKYGDGAADIAPIFGLNKRQGRQLLAYLGAPKELYEKTPTADLEDDKPQLPDEDALGVTYEAIDNYLEGKPVTPEEQKVIENHYIRNAHKRELAYTRYTWPKS</sequence>
<proteinExistence type="inferred from homology"/>
<protein>
    <recommendedName>
        <fullName evidence="1">NH(3)-dependent NAD(+) synthetase</fullName>
        <ecNumber evidence="1">6.3.1.5</ecNumber>
    </recommendedName>
</protein>
<evidence type="ECO:0000255" key="1">
    <source>
        <dbReference type="HAMAP-Rule" id="MF_00193"/>
    </source>
</evidence>
<feature type="chain" id="PRO_1000077612" description="NH(3)-dependent NAD(+) synthetase">
    <location>
        <begin position="1"/>
        <end position="273"/>
    </location>
</feature>
<feature type="binding site" evidence="1">
    <location>
        <begin position="47"/>
        <end position="54"/>
    </location>
    <ligand>
        <name>ATP</name>
        <dbReference type="ChEBI" id="CHEBI:30616"/>
    </ligand>
</feature>
<feature type="binding site" evidence="1">
    <location>
        <position position="53"/>
    </location>
    <ligand>
        <name>Mg(2+)</name>
        <dbReference type="ChEBI" id="CHEBI:18420"/>
    </ligand>
</feature>
<feature type="binding site" evidence="1">
    <location>
        <position position="139"/>
    </location>
    <ligand>
        <name>deamido-NAD(+)</name>
        <dbReference type="ChEBI" id="CHEBI:58437"/>
    </ligand>
</feature>
<feature type="binding site" evidence="1">
    <location>
        <position position="159"/>
    </location>
    <ligand>
        <name>ATP</name>
        <dbReference type="ChEBI" id="CHEBI:30616"/>
    </ligand>
</feature>
<feature type="binding site" evidence="1">
    <location>
        <position position="164"/>
    </location>
    <ligand>
        <name>Mg(2+)</name>
        <dbReference type="ChEBI" id="CHEBI:18420"/>
    </ligand>
</feature>
<feature type="binding site" evidence="1">
    <location>
        <position position="172"/>
    </location>
    <ligand>
        <name>deamido-NAD(+)</name>
        <dbReference type="ChEBI" id="CHEBI:58437"/>
    </ligand>
</feature>
<feature type="binding site" evidence="1">
    <location>
        <position position="179"/>
    </location>
    <ligand>
        <name>deamido-NAD(+)</name>
        <dbReference type="ChEBI" id="CHEBI:58437"/>
    </ligand>
</feature>
<feature type="binding site" evidence="1">
    <location>
        <position position="188"/>
    </location>
    <ligand>
        <name>ATP</name>
        <dbReference type="ChEBI" id="CHEBI:30616"/>
    </ligand>
</feature>
<feature type="binding site" evidence="1">
    <location>
        <position position="210"/>
    </location>
    <ligand>
        <name>ATP</name>
        <dbReference type="ChEBI" id="CHEBI:30616"/>
    </ligand>
</feature>
<feature type="binding site" evidence="1">
    <location>
        <begin position="259"/>
        <end position="260"/>
    </location>
    <ligand>
        <name>deamido-NAD(+)</name>
        <dbReference type="ChEBI" id="CHEBI:58437"/>
    </ligand>
</feature>
<name>NADE_STAA1</name>
<dbReference type="EC" id="6.3.1.5" evidence="1"/>
<dbReference type="EMBL" id="AP009324">
    <property type="protein sequence ID" value="BAF78780.1"/>
    <property type="molecule type" value="Genomic_DNA"/>
</dbReference>
<dbReference type="RefSeq" id="WP_000040866.1">
    <property type="nucleotide sequence ID" value="NC_009782.1"/>
</dbReference>
<dbReference type="SMR" id="A7X442"/>
<dbReference type="KEGG" id="saw:SAHV_1897"/>
<dbReference type="HOGENOM" id="CLU_059327_3_0_9"/>
<dbReference type="UniPathway" id="UPA00253">
    <property type="reaction ID" value="UER00333"/>
</dbReference>
<dbReference type="GO" id="GO:0005737">
    <property type="term" value="C:cytoplasm"/>
    <property type="evidence" value="ECO:0007669"/>
    <property type="project" value="InterPro"/>
</dbReference>
<dbReference type="GO" id="GO:0005524">
    <property type="term" value="F:ATP binding"/>
    <property type="evidence" value="ECO:0007669"/>
    <property type="project" value="UniProtKB-UniRule"/>
</dbReference>
<dbReference type="GO" id="GO:0004359">
    <property type="term" value="F:glutaminase activity"/>
    <property type="evidence" value="ECO:0007669"/>
    <property type="project" value="InterPro"/>
</dbReference>
<dbReference type="GO" id="GO:0046872">
    <property type="term" value="F:metal ion binding"/>
    <property type="evidence" value="ECO:0007669"/>
    <property type="project" value="UniProtKB-KW"/>
</dbReference>
<dbReference type="GO" id="GO:0003952">
    <property type="term" value="F:NAD+ synthase (glutamine-hydrolyzing) activity"/>
    <property type="evidence" value="ECO:0007669"/>
    <property type="project" value="InterPro"/>
</dbReference>
<dbReference type="GO" id="GO:0008795">
    <property type="term" value="F:NAD+ synthase activity"/>
    <property type="evidence" value="ECO:0007669"/>
    <property type="project" value="UniProtKB-UniRule"/>
</dbReference>
<dbReference type="GO" id="GO:0009435">
    <property type="term" value="P:NAD biosynthetic process"/>
    <property type="evidence" value="ECO:0007669"/>
    <property type="project" value="UniProtKB-UniRule"/>
</dbReference>
<dbReference type="CDD" id="cd00553">
    <property type="entry name" value="NAD_synthase"/>
    <property type="match status" value="1"/>
</dbReference>
<dbReference type="FunFam" id="3.40.50.620:FF:000015">
    <property type="entry name" value="NH(3)-dependent NAD(+) synthetase"/>
    <property type="match status" value="1"/>
</dbReference>
<dbReference type="Gene3D" id="3.40.50.620">
    <property type="entry name" value="HUPs"/>
    <property type="match status" value="1"/>
</dbReference>
<dbReference type="HAMAP" id="MF_00193">
    <property type="entry name" value="NadE_ammonia_dep"/>
    <property type="match status" value="1"/>
</dbReference>
<dbReference type="InterPro" id="IPR022310">
    <property type="entry name" value="NAD/GMP_synthase"/>
</dbReference>
<dbReference type="InterPro" id="IPR003694">
    <property type="entry name" value="NAD_synthase"/>
</dbReference>
<dbReference type="InterPro" id="IPR022926">
    <property type="entry name" value="NH(3)-dep_NAD(+)_synth"/>
</dbReference>
<dbReference type="InterPro" id="IPR014729">
    <property type="entry name" value="Rossmann-like_a/b/a_fold"/>
</dbReference>
<dbReference type="NCBIfam" id="TIGR00552">
    <property type="entry name" value="nadE"/>
    <property type="match status" value="1"/>
</dbReference>
<dbReference type="NCBIfam" id="NF001979">
    <property type="entry name" value="PRK00768.1"/>
    <property type="match status" value="1"/>
</dbReference>
<dbReference type="PANTHER" id="PTHR23090">
    <property type="entry name" value="NH 3 /GLUTAMINE-DEPENDENT NAD + SYNTHETASE"/>
    <property type="match status" value="1"/>
</dbReference>
<dbReference type="PANTHER" id="PTHR23090:SF7">
    <property type="entry name" value="NH(3)-DEPENDENT NAD(+) SYNTHETASE"/>
    <property type="match status" value="1"/>
</dbReference>
<dbReference type="Pfam" id="PF02540">
    <property type="entry name" value="NAD_synthase"/>
    <property type="match status" value="1"/>
</dbReference>
<dbReference type="SUPFAM" id="SSF52402">
    <property type="entry name" value="Adenine nucleotide alpha hydrolases-like"/>
    <property type="match status" value="1"/>
</dbReference>
<gene>
    <name evidence="1" type="primary">nadE</name>
    <name type="ordered locus">SAHV_1897</name>
</gene>
<accession>A7X442</accession>
<organism>
    <name type="scientific">Staphylococcus aureus (strain Mu3 / ATCC 700698)</name>
    <dbReference type="NCBI Taxonomy" id="418127"/>
    <lineage>
        <taxon>Bacteria</taxon>
        <taxon>Bacillati</taxon>
        <taxon>Bacillota</taxon>
        <taxon>Bacilli</taxon>
        <taxon>Bacillales</taxon>
        <taxon>Staphylococcaceae</taxon>
        <taxon>Staphylococcus</taxon>
    </lineage>
</organism>
<comment type="function">
    <text evidence="1">Catalyzes the ATP-dependent amidation of deamido-NAD to form NAD. Uses ammonia as a nitrogen source.</text>
</comment>
<comment type="catalytic activity">
    <reaction evidence="1">
        <text>deamido-NAD(+) + NH4(+) + ATP = AMP + diphosphate + NAD(+) + H(+)</text>
        <dbReference type="Rhea" id="RHEA:21188"/>
        <dbReference type="ChEBI" id="CHEBI:15378"/>
        <dbReference type="ChEBI" id="CHEBI:28938"/>
        <dbReference type="ChEBI" id="CHEBI:30616"/>
        <dbReference type="ChEBI" id="CHEBI:33019"/>
        <dbReference type="ChEBI" id="CHEBI:57540"/>
        <dbReference type="ChEBI" id="CHEBI:58437"/>
        <dbReference type="ChEBI" id="CHEBI:456215"/>
        <dbReference type="EC" id="6.3.1.5"/>
    </reaction>
</comment>
<comment type="pathway">
    <text evidence="1">Cofactor biosynthesis; NAD(+) biosynthesis; NAD(+) from deamido-NAD(+) (ammonia route): step 1/1.</text>
</comment>
<comment type="subunit">
    <text evidence="1">Homodimer.</text>
</comment>
<comment type="similarity">
    <text evidence="1">Belongs to the NAD synthetase family.</text>
</comment>
<reference key="1">
    <citation type="journal article" date="2008" name="Antimicrob. Agents Chemother.">
        <title>Mutated response regulator graR is responsible for phenotypic conversion of Staphylococcus aureus from heterogeneous vancomycin-intermediate resistance to vancomycin-intermediate resistance.</title>
        <authorList>
            <person name="Neoh H.-M."/>
            <person name="Cui L."/>
            <person name="Yuzawa H."/>
            <person name="Takeuchi F."/>
            <person name="Matsuo M."/>
            <person name="Hiramatsu K."/>
        </authorList>
    </citation>
    <scope>NUCLEOTIDE SEQUENCE [LARGE SCALE GENOMIC DNA]</scope>
    <source>
        <strain>Mu3 / ATCC 700698</strain>
    </source>
</reference>